<protein>
    <recommendedName>
        <fullName evidence="1">Endoribonuclease YbeY</fullName>
        <ecNumber evidence="1">3.1.-.-</ecNumber>
    </recommendedName>
</protein>
<organism>
    <name type="scientific">Methylobacillus flagellatus (strain ATCC 51484 / DSM 6875 / VKM B-1610 / KT)</name>
    <dbReference type="NCBI Taxonomy" id="265072"/>
    <lineage>
        <taxon>Bacteria</taxon>
        <taxon>Pseudomonadati</taxon>
        <taxon>Pseudomonadota</taxon>
        <taxon>Betaproteobacteria</taxon>
        <taxon>Nitrosomonadales</taxon>
        <taxon>Methylophilaceae</taxon>
        <taxon>Methylobacillus</taxon>
    </lineage>
</organism>
<feature type="chain" id="PRO_0000284241" description="Endoribonuclease YbeY">
    <location>
        <begin position="1"/>
        <end position="149"/>
    </location>
</feature>
<feature type="binding site" evidence="1">
    <location>
        <position position="106"/>
    </location>
    <ligand>
        <name>Zn(2+)</name>
        <dbReference type="ChEBI" id="CHEBI:29105"/>
        <note>catalytic</note>
    </ligand>
</feature>
<feature type="binding site" evidence="1">
    <location>
        <position position="110"/>
    </location>
    <ligand>
        <name>Zn(2+)</name>
        <dbReference type="ChEBI" id="CHEBI:29105"/>
        <note>catalytic</note>
    </ligand>
</feature>
<feature type="binding site" evidence="1">
    <location>
        <position position="116"/>
    </location>
    <ligand>
        <name>Zn(2+)</name>
        <dbReference type="ChEBI" id="CHEBI:29105"/>
        <note>catalytic</note>
    </ligand>
</feature>
<gene>
    <name evidence="1" type="primary">ybeY</name>
    <name type="ordered locus">Mfla_0649</name>
</gene>
<name>YBEY_METFK</name>
<keyword id="KW-0963">Cytoplasm</keyword>
<keyword id="KW-0255">Endonuclease</keyword>
<keyword id="KW-0378">Hydrolase</keyword>
<keyword id="KW-0479">Metal-binding</keyword>
<keyword id="KW-0540">Nuclease</keyword>
<keyword id="KW-1185">Reference proteome</keyword>
<keyword id="KW-0690">Ribosome biogenesis</keyword>
<keyword id="KW-0698">rRNA processing</keyword>
<keyword id="KW-0862">Zinc</keyword>
<comment type="function">
    <text evidence="1">Single strand-specific metallo-endoribonuclease involved in late-stage 70S ribosome quality control and in maturation of the 3' terminus of the 16S rRNA.</text>
</comment>
<comment type="cofactor">
    <cofactor evidence="1">
        <name>Zn(2+)</name>
        <dbReference type="ChEBI" id="CHEBI:29105"/>
    </cofactor>
    <text evidence="1">Binds 1 zinc ion.</text>
</comment>
<comment type="subcellular location">
    <subcellularLocation>
        <location evidence="1">Cytoplasm</location>
    </subcellularLocation>
</comment>
<comment type="similarity">
    <text evidence="1">Belongs to the endoribonuclease YbeY family.</text>
</comment>
<reference key="1">
    <citation type="submission" date="2006-03" db="EMBL/GenBank/DDBJ databases">
        <title>Complete sequence of Methylobacillus flagellatus KT.</title>
        <authorList>
            <consortium name="US DOE Joint Genome Institute"/>
            <person name="Copeland A."/>
            <person name="Lucas S."/>
            <person name="Lapidus A."/>
            <person name="Barry K."/>
            <person name="Detter J.C."/>
            <person name="Glavina del Rio T."/>
            <person name="Hammon N."/>
            <person name="Israni S."/>
            <person name="Dalin E."/>
            <person name="Tice H."/>
            <person name="Pitluck S."/>
            <person name="Brettin T."/>
            <person name="Bruce D."/>
            <person name="Han C."/>
            <person name="Tapia R."/>
            <person name="Saunders E."/>
            <person name="Gilna P."/>
            <person name="Schmutz J."/>
            <person name="Larimer F."/>
            <person name="Land M."/>
            <person name="Kyrpides N."/>
            <person name="Anderson I."/>
            <person name="Richardson P."/>
        </authorList>
    </citation>
    <scope>NUCLEOTIDE SEQUENCE [LARGE SCALE GENOMIC DNA]</scope>
    <source>
        <strain>ATCC 51484 / DSM 6875 / VKM B-1610 / KT</strain>
    </source>
</reference>
<accession>Q1H3L8</accession>
<proteinExistence type="inferred from homology"/>
<evidence type="ECO:0000255" key="1">
    <source>
        <dbReference type="HAMAP-Rule" id="MF_00009"/>
    </source>
</evidence>
<sequence length="149" mass="17374">MPRLAMNVQYASEWDSLPNEKQFRKWARAALRVDTEATLRIVDEEEGRMLNRDYRGKDYATNVLTFPLEEEPWLVGDIILCAPVVAREAAEQNITLESHYAHLTVHGILHMHGYDHEDEHQAELMESIESFTMIQLGYPDPYSSEKRKR</sequence>
<dbReference type="EC" id="3.1.-.-" evidence="1"/>
<dbReference type="EMBL" id="CP000284">
    <property type="protein sequence ID" value="ABE48919.1"/>
    <property type="molecule type" value="Genomic_DNA"/>
</dbReference>
<dbReference type="RefSeq" id="WP_011479016.1">
    <property type="nucleotide sequence ID" value="NC_007947.1"/>
</dbReference>
<dbReference type="SMR" id="Q1H3L8"/>
<dbReference type="STRING" id="265072.Mfla_0649"/>
<dbReference type="KEGG" id="mfa:Mfla_0649"/>
<dbReference type="eggNOG" id="COG0319">
    <property type="taxonomic scope" value="Bacteria"/>
</dbReference>
<dbReference type="HOGENOM" id="CLU_106710_0_1_4"/>
<dbReference type="OrthoDB" id="9807740at2"/>
<dbReference type="Proteomes" id="UP000002440">
    <property type="component" value="Chromosome"/>
</dbReference>
<dbReference type="GO" id="GO:0005737">
    <property type="term" value="C:cytoplasm"/>
    <property type="evidence" value="ECO:0007669"/>
    <property type="project" value="UniProtKB-SubCell"/>
</dbReference>
<dbReference type="GO" id="GO:0004222">
    <property type="term" value="F:metalloendopeptidase activity"/>
    <property type="evidence" value="ECO:0007669"/>
    <property type="project" value="InterPro"/>
</dbReference>
<dbReference type="GO" id="GO:0004521">
    <property type="term" value="F:RNA endonuclease activity"/>
    <property type="evidence" value="ECO:0007669"/>
    <property type="project" value="UniProtKB-UniRule"/>
</dbReference>
<dbReference type="GO" id="GO:0008270">
    <property type="term" value="F:zinc ion binding"/>
    <property type="evidence" value="ECO:0007669"/>
    <property type="project" value="UniProtKB-UniRule"/>
</dbReference>
<dbReference type="GO" id="GO:0006364">
    <property type="term" value="P:rRNA processing"/>
    <property type="evidence" value="ECO:0007669"/>
    <property type="project" value="UniProtKB-UniRule"/>
</dbReference>
<dbReference type="Gene3D" id="3.40.390.30">
    <property type="entry name" value="Metalloproteases ('zincins'), catalytic domain"/>
    <property type="match status" value="1"/>
</dbReference>
<dbReference type="HAMAP" id="MF_00009">
    <property type="entry name" value="Endoribonucl_YbeY"/>
    <property type="match status" value="1"/>
</dbReference>
<dbReference type="InterPro" id="IPR023091">
    <property type="entry name" value="MetalPrtase_cat_dom_sf_prd"/>
</dbReference>
<dbReference type="InterPro" id="IPR002036">
    <property type="entry name" value="YbeY"/>
</dbReference>
<dbReference type="NCBIfam" id="TIGR00043">
    <property type="entry name" value="rRNA maturation RNase YbeY"/>
    <property type="match status" value="1"/>
</dbReference>
<dbReference type="PANTHER" id="PTHR46986">
    <property type="entry name" value="ENDORIBONUCLEASE YBEY, CHLOROPLASTIC"/>
    <property type="match status" value="1"/>
</dbReference>
<dbReference type="PANTHER" id="PTHR46986:SF1">
    <property type="entry name" value="ENDORIBONUCLEASE YBEY, CHLOROPLASTIC"/>
    <property type="match status" value="1"/>
</dbReference>
<dbReference type="Pfam" id="PF02130">
    <property type="entry name" value="YbeY"/>
    <property type="match status" value="1"/>
</dbReference>
<dbReference type="SUPFAM" id="SSF55486">
    <property type="entry name" value="Metalloproteases ('zincins'), catalytic domain"/>
    <property type="match status" value="1"/>
</dbReference>